<evidence type="ECO:0000255" key="1">
    <source>
        <dbReference type="HAMAP-Rule" id="MF_00574"/>
    </source>
</evidence>
<evidence type="ECO:0000305" key="2"/>
<reference key="1">
    <citation type="submission" date="2007-05" db="EMBL/GenBank/DDBJ databases">
        <title>Complete sequence of chromosome of Staphylococcus aureus subsp. aureus JH9.</title>
        <authorList>
            <consortium name="US DOE Joint Genome Institute"/>
            <person name="Copeland A."/>
            <person name="Lucas S."/>
            <person name="Lapidus A."/>
            <person name="Barry K."/>
            <person name="Detter J.C."/>
            <person name="Glavina del Rio T."/>
            <person name="Hammon N."/>
            <person name="Israni S."/>
            <person name="Pitluck S."/>
            <person name="Chain P."/>
            <person name="Malfatti S."/>
            <person name="Shin M."/>
            <person name="Vergez L."/>
            <person name="Schmutz J."/>
            <person name="Larimer F."/>
            <person name="Land M."/>
            <person name="Hauser L."/>
            <person name="Kyrpides N."/>
            <person name="Kim E."/>
            <person name="Tomasz A."/>
            <person name="Richardson P."/>
        </authorList>
    </citation>
    <scope>NUCLEOTIDE SEQUENCE [LARGE SCALE GENOMIC DNA]</scope>
    <source>
        <strain>JH9</strain>
    </source>
</reference>
<proteinExistence type="inferred from homology"/>
<comment type="similarity">
    <text evidence="1">Belongs to the eukaryotic ribosomal protein eL8 family.</text>
</comment>
<name>RXL7_STAA9</name>
<accession>A5IQ98</accession>
<feature type="chain" id="PRO_1000082332" description="RNA-binding protein SaurJH9_0567">
    <location>
        <begin position="1"/>
        <end position="84"/>
    </location>
</feature>
<sequence length="84" mass="9446">MSKEKVARFNKQHFVVGLKETLKALKKDQVTSLIIAEDVEVYLMTRVLSQINQKNIPVSFFKSKHALGKHVGINVNATIVALIK</sequence>
<organism>
    <name type="scientific">Staphylococcus aureus (strain JH9)</name>
    <dbReference type="NCBI Taxonomy" id="359786"/>
    <lineage>
        <taxon>Bacteria</taxon>
        <taxon>Bacillati</taxon>
        <taxon>Bacillota</taxon>
        <taxon>Bacilli</taxon>
        <taxon>Bacillales</taxon>
        <taxon>Staphylococcaceae</taxon>
        <taxon>Staphylococcus</taxon>
    </lineage>
</organism>
<protein>
    <recommendedName>
        <fullName evidence="1">RNA-binding protein SaurJH9_0567</fullName>
    </recommendedName>
    <alternativeName>
        <fullName evidence="2">Putative ribosomal protein L7Ae-like</fullName>
    </alternativeName>
    <alternativeName>
        <fullName evidence="1">Ribosomal protein eL8-like</fullName>
    </alternativeName>
</protein>
<keyword id="KW-0694">RNA-binding</keyword>
<gene>
    <name type="ordered locus">SaurJH9_0567</name>
</gene>
<dbReference type="EMBL" id="CP000703">
    <property type="protein sequence ID" value="ABQ48371.1"/>
    <property type="molecule type" value="Genomic_DNA"/>
</dbReference>
<dbReference type="RefSeq" id="WP_000031892.1">
    <property type="nucleotide sequence ID" value="NC_009487.1"/>
</dbReference>
<dbReference type="SMR" id="A5IQ98"/>
<dbReference type="KEGG" id="saj:SaurJH9_0567"/>
<dbReference type="HOGENOM" id="CLU_168063_0_0_9"/>
<dbReference type="GO" id="GO:0003723">
    <property type="term" value="F:RNA binding"/>
    <property type="evidence" value="ECO:0007669"/>
    <property type="project" value="UniProtKB-UniRule"/>
</dbReference>
<dbReference type="Gene3D" id="3.30.1330.30">
    <property type="match status" value="1"/>
</dbReference>
<dbReference type="HAMAP" id="MF_00574">
    <property type="entry name" value="Ribosomal_eL8_Bact"/>
    <property type="match status" value="1"/>
</dbReference>
<dbReference type="InterPro" id="IPR029064">
    <property type="entry name" value="Ribosomal_eL30-like_sf"/>
</dbReference>
<dbReference type="InterPro" id="IPR004038">
    <property type="entry name" value="Ribosomal_eL8/eL30/eS12/Gad45"/>
</dbReference>
<dbReference type="InterPro" id="IPR023460">
    <property type="entry name" value="RNA_bf_YbxF-like"/>
</dbReference>
<dbReference type="NCBIfam" id="NF010123">
    <property type="entry name" value="PRK13600.1"/>
    <property type="match status" value="1"/>
</dbReference>
<dbReference type="Pfam" id="PF01248">
    <property type="entry name" value="Ribosomal_L7Ae"/>
    <property type="match status" value="1"/>
</dbReference>
<dbReference type="SUPFAM" id="SSF55315">
    <property type="entry name" value="L30e-like"/>
    <property type="match status" value="1"/>
</dbReference>